<evidence type="ECO:0000305" key="1"/>
<accession>P0ACW1</accession>
<accession>P38395</accession>
<accession>P76851</accession>
<accession>Q8X2M9</accession>
<proteinExistence type="predicted"/>
<name>YDAF_ECO57</name>
<protein>
    <recommendedName>
        <fullName>Uncharacterized protein YdaF</fullName>
    </recommendedName>
</protein>
<reference key="1">
    <citation type="journal article" date="2001" name="Nature">
        <title>Genome sequence of enterohaemorrhagic Escherichia coli O157:H7.</title>
        <authorList>
            <person name="Perna N.T."/>
            <person name="Plunkett G. III"/>
            <person name="Burland V."/>
            <person name="Mau B."/>
            <person name="Glasner J.D."/>
            <person name="Rose D.J."/>
            <person name="Mayhew G.F."/>
            <person name="Evans P.S."/>
            <person name="Gregor J."/>
            <person name="Kirkpatrick H.A."/>
            <person name="Posfai G."/>
            <person name="Hackett J."/>
            <person name="Klink S."/>
            <person name="Boutin A."/>
            <person name="Shao Y."/>
            <person name="Miller L."/>
            <person name="Grotbeck E.J."/>
            <person name="Davis N.W."/>
            <person name="Lim A."/>
            <person name="Dimalanta E.T."/>
            <person name="Potamousis K."/>
            <person name="Apodaca J."/>
            <person name="Anantharaman T.S."/>
            <person name="Lin J."/>
            <person name="Yen G."/>
            <person name="Schwartz D.C."/>
            <person name="Welch R.A."/>
            <person name="Blattner F.R."/>
        </authorList>
    </citation>
    <scope>NUCLEOTIDE SEQUENCE [LARGE SCALE GENOMIC DNA]</scope>
    <source>
        <strain>O157:H7 / EDL933 / ATCC 700927 / EHEC</strain>
    </source>
</reference>
<reference key="2">
    <citation type="journal article" date="2001" name="DNA Res.">
        <title>Complete genome sequence of enterohemorrhagic Escherichia coli O157:H7 and genomic comparison with a laboratory strain K-12.</title>
        <authorList>
            <person name="Hayashi T."/>
            <person name="Makino K."/>
            <person name="Ohnishi M."/>
            <person name="Kurokawa K."/>
            <person name="Ishii K."/>
            <person name="Yokoyama K."/>
            <person name="Han C.-G."/>
            <person name="Ohtsubo E."/>
            <person name="Nakayama K."/>
            <person name="Murata T."/>
            <person name="Tanaka M."/>
            <person name="Tobe T."/>
            <person name="Iida T."/>
            <person name="Takami H."/>
            <person name="Honda T."/>
            <person name="Sasakawa C."/>
            <person name="Ogasawara N."/>
            <person name="Yasunaga T."/>
            <person name="Kuhara S."/>
            <person name="Shiba T."/>
            <person name="Hattori M."/>
            <person name="Shinagawa H."/>
        </authorList>
    </citation>
    <scope>NUCLEOTIDE SEQUENCE [LARGE SCALE GENOMIC DNA]</scope>
    <source>
        <strain>O157:H7 / Sakai / RIMD 0509952 / EHEC</strain>
    </source>
</reference>
<feature type="chain" id="PRO_0000168904" description="Uncharacterized protein YdaF">
    <location>
        <begin position="1"/>
        <end position="51"/>
    </location>
</feature>
<dbReference type="EMBL" id="AE005174">
    <property type="status" value="NOT_ANNOTATED_CDS"/>
    <property type="molecule type" value="Genomic_DNA"/>
</dbReference>
<dbReference type="EMBL" id="BA000007">
    <property type="protein sequence ID" value="BAB35361.1"/>
    <property type="molecule type" value="Genomic_DNA"/>
</dbReference>
<dbReference type="PIR" id="B90871">
    <property type="entry name" value="B90871"/>
</dbReference>
<dbReference type="RefSeq" id="NP_309965.1">
    <property type="nucleotide sequence ID" value="NC_002695.1"/>
</dbReference>
<dbReference type="RefSeq" id="WP_001169151.1">
    <property type="nucleotide sequence ID" value="NZ_SDVX01000007.1"/>
</dbReference>
<dbReference type="STRING" id="386585.gene:10364954"/>
<dbReference type="KEGG" id="ecs:ECs_1939"/>
<dbReference type="PATRIC" id="fig|386585.9.peg.2045"/>
<dbReference type="eggNOG" id="ENOG5031KUZ">
    <property type="taxonomic scope" value="Bacteria"/>
</dbReference>
<dbReference type="HOGENOM" id="CLU_191375_1_0_6"/>
<dbReference type="Proteomes" id="UP000000558">
    <property type="component" value="Chromosome"/>
</dbReference>
<dbReference type="Proteomes" id="UP000002519">
    <property type="component" value="Chromosome"/>
</dbReference>
<dbReference type="InterPro" id="IPR009821">
    <property type="entry name" value="DUF1391"/>
</dbReference>
<dbReference type="Pfam" id="PF07151">
    <property type="entry name" value="DUF1391"/>
    <property type="match status" value="1"/>
</dbReference>
<comment type="similarity">
    <text evidence="1">To E.coli YdfA.</text>
</comment>
<organism>
    <name type="scientific">Escherichia coli O157:H7</name>
    <dbReference type="NCBI Taxonomy" id="83334"/>
    <lineage>
        <taxon>Bacteria</taxon>
        <taxon>Pseudomonadati</taxon>
        <taxon>Pseudomonadota</taxon>
        <taxon>Gammaproteobacteria</taxon>
        <taxon>Enterobacterales</taxon>
        <taxon>Enterobacteriaceae</taxon>
        <taxon>Escherichia</taxon>
    </lineage>
</organism>
<sequence>MQKIDLGNNESLVCGVFPNQDGTFTAMTYTKSKTFKTETGARRWLEKHTVS</sequence>
<gene>
    <name type="primary">ydaF</name>
    <name type="ordered locus">Z2402.1</name>
    <name type="ordered locus">ECs1939</name>
</gene>
<keyword id="KW-1185">Reference proteome</keyword>